<evidence type="ECO:0000255" key="1">
    <source>
        <dbReference type="HAMAP-Rule" id="MF_00537"/>
    </source>
</evidence>
<evidence type="ECO:0000256" key="2">
    <source>
        <dbReference type="SAM" id="MobiDB-lite"/>
    </source>
</evidence>
<evidence type="ECO:0000305" key="3"/>
<reference key="1">
    <citation type="submission" date="2008-05" db="EMBL/GenBank/DDBJ databases">
        <title>Complete sequence of Rhodopseudomonas palustris TIE-1.</title>
        <authorList>
            <consortium name="US DOE Joint Genome Institute"/>
            <person name="Lucas S."/>
            <person name="Copeland A."/>
            <person name="Lapidus A."/>
            <person name="Glavina del Rio T."/>
            <person name="Dalin E."/>
            <person name="Tice H."/>
            <person name="Pitluck S."/>
            <person name="Chain P."/>
            <person name="Malfatti S."/>
            <person name="Shin M."/>
            <person name="Vergez L."/>
            <person name="Lang D."/>
            <person name="Schmutz J."/>
            <person name="Larimer F."/>
            <person name="Land M."/>
            <person name="Hauser L."/>
            <person name="Kyrpides N."/>
            <person name="Mikhailova N."/>
            <person name="Emerson D."/>
            <person name="Newman D.K."/>
            <person name="Roden E."/>
            <person name="Richardson P."/>
        </authorList>
    </citation>
    <scope>NUCLEOTIDE SEQUENCE [LARGE SCALE GENOMIC DNA]</scope>
    <source>
        <strain>TIE-1</strain>
    </source>
</reference>
<dbReference type="EMBL" id="CP001096">
    <property type="protein sequence ID" value="ACF02154.1"/>
    <property type="molecule type" value="Genomic_DNA"/>
</dbReference>
<dbReference type="RefSeq" id="WP_012496648.1">
    <property type="nucleotide sequence ID" value="NC_011004.1"/>
</dbReference>
<dbReference type="SMR" id="B3QBW7"/>
<dbReference type="KEGG" id="rpt:Rpal_3654"/>
<dbReference type="HOGENOM" id="CLU_139869_0_1_5"/>
<dbReference type="OrthoDB" id="9810484at2"/>
<dbReference type="Proteomes" id="UP000001725">
    <property type="component" value="Chromosome"/>
</dbReference>
<dbReference type="GO" id="GO:0005737">
    <property type="term" value="C:cytoplasm"/>
    <property type="evidence" value="ECO:0007669"/>
    <property type="project" value="UniProtKB-ARBA"/>
</dbReference>
<dbReference type="GO" id="GO:0015935">
    <property type="term" value="C:small ribosomal subunit"/>
    <property type="evidence" value="ECO:0007669"/>
    <property type="project" value="TreeGrafter"/>
</dbReference>
<dbReference type="GO" id="GO:0019843">
    <property type="term" value="F:rRNA binding"/>
    <property type="evidence" value="ECO:0007669"/>
    <property type="project" value="UniProtKB-UniRule"/>
</dbReference>
<dbReference type="GO" id="GO:0003735">
    <property type="term" value="F:structural constituent of ribosome"/>
    <property type="evidence" value="ECO:0007669"/>
    <property type="project" value="InterPro"/>
</dbReference>
<dbReference type="GO" id="GO:0006412">
    <property type="term" value="P:translation"/>
    <property type="evidence" value="ECO:0007669"/>
    <property type="project" value="UniProtKB-UniRule"/>
</dbReference>
<dbReference type="FunFam" id="1.10.287.1480:FF:000001">
    <property type="entry name" value="30S ribosomal protein S14"/>
    <property type="match status" value="1"/>
</dbReference>
<dbReference type="Gene3D" id="1.10.287.1480">
    <property type="match status" value="1"/>
</dbReference>
<dbReference type="HAMAP" id="MF_00537">
    <property type="entry name" value="Ribosomal_uS14_1"/>
    <property type="match status" value="1"/>
</dbReference>
<dbReference type="InterPro" id="IPR001209">
    <property type="entry name" value="Ribosomal_uS14"/>
</dbReference>
<dbReference type="InterPro" id="IPR023036">
    <property type="entry name" value="Ribosomal_uS14_bac/plastid"/>
</dbReference>
<dbReference type="NCBIfam" id="NF006477">
    <property type="entry name" value="PRK08881.1"/>
    <property type="match status" value="1"/>
</dbReference>
<dbReference type="PANTHER" id="PTHR19836">
    <property type="entry name" value="30S RIBOSOMAL PROTEIN S14"/>
    <property type="match status" value="1"/>
</dbReference>
<dbReference type="PANTHER" id="PTHR19836:SF19">
    <property type="entry name" value="SMALL RIBOSOMAL SUBUNIT PROTEIN US14M"/>
    <property type="match status" value="1"/>
</dbReference>
<dbReference type="Pfam" id="PF00253">
    <property type="entry name" value="Ribosomal_S14"/>
    <property type="match status" value="1"/>
</dbReference>
<dbReference type="SUPFAM" id="SSF57716">
    <property type="entry name" value="Glucocorticoid receptor-like (DNA-binding domain)"/>
    <property type="match status" value="1"/>
</dbReference>
<protein>
    <recommendedName>
        <fullName evidence="1">Small ribosomal subunit protein uS14</fullName>
    </recommendedName>
    <alternativeName>
        <fullName evidence="3">30S ribosomal protein S14</fullName>
    </alternativeName>
</protein>
<accession>B3QBW7</accession>
<gene>
    <name evidence="1" type="primary">rpsN</name>
    <name type="ordered locus">Rpal_3654</name>
</gene>
<organism>
    <name type="scientific">Rhodopseudomonas palustris (strain TIE-1)</name>
    <dbReference type="NCBI Taxonomy" id="395960"/>
    <lineage>
        <taxon>Bacteria</taxon>
        <taxon>Pseudomonadati</taxon>
        <taxon>Pseudomonadota</taxon>
        <taxon>Alphaproteobacteria</taxon>
        <taxon>Hyphomicrobiales</taxon>
        <taxon>Nitrobacteraceae</taxon>
        <taxon>Rhodopseudomonas</taxon>
    </lineage>
</organism>
<keyword id="KW-0687">Ribonucleoprotein</keyword>
<keyword id="KW-0689">Ribosomal protein</keyword>
<keyword id="KW-0694">RNA-binding</keyword>
<keyword id="KW-0699">rRNA-binding</keyword>
<sequence length="101" mass="11448">MAKKSAIEKNNRRKKMTKNAAPKRARLKAIIADKSKPMEERFAATLKLAEMPRNSSATRIRNRCDLTGRPRSVYRLNKLSRIAIRDLGSRGLVPGLVKSSW</sequence>
<feature type="chain" id="PRO_1000128542" description="Small ribosomal subunit protein uS14">
    <location>
        <begin position="1"/>
        <end position="101"/>
    </location>
</feature>
<feature type="region of interest" description="Disordered" evidence="2">
    <location>
        <begin position="1"/>
        <end position="23"/>
    </location>
</feature>
<feature type="compositionally biased region" description="Basic and acidic residues" evidence="2">
    <location>
        <begin position="1"/>
        <end position="10"/>
    </location>
</feature>
<feature type="compositionally biased region" description="Basic residues" evidence="2">
    <location>
        <begin position="11"/>
        <end position="23"/>
    </location>
</feature>
<comment type="function">
    <text evidence="1">Binds 16S rRNA, required for the assembly of 30S particles and may also be responsible for determining the conformation of the 16S rRNA at the A site.</text>
</comment>
<comment type="subunit">
    <text evidence="1">Part of the 30S ribosomal subunit. Contacts proteins S3 and S10.</text>
</comment>
<comment type="similarity">
    <text evidence="1">Belongs to the universal ribosomal protein uS14 family.</text>
</comment>
<name>RS14_RHOPT</name>
<proteinExistence type="inferred from homology"/>